<protein>
    <recommendedName>
        <fullName evidence="3">Large ribosomal subunit protein P1</fullName>
    </recommendedName>
    <alternativeName>
        <fullName>60S acidic ribosomal protein P1</fullName>
    </alternativeName>
    <alternativeName>
        <fullName>AfP1</fullName>
    </alternativeName>
</protein>
<keyword id="KW-0597">Phosphoprotein</keyword>
<keyword id="KW-1185">Reference proteome</keyword>
<keyword id="KW-0687">Ribonucleoprotein</keyword>
<keyword id="KW-0689">Ribosomal protein</keyword>
<organism>
    <name type="scientific">Aspergillus fumigatus (strain ATCC MYA-4609 / CBS 101355 / FGSC A1100 / Af293)</name>
    <name type="common">Neosartorya fumigata</name>
    <dbReference type="NCBI Taxonomy" id="330879"/>
    <lineage>
        <taxon>Eukaryota</taxon>
        <taxon>Fungi</taxon>
        <taxon>Dikarya</taxon>
        <taxon>Ascomycota</taxon>
        <taxon>Pezizomycotina</taxon>
        <taxon>Eurotiomycetes</taxon>
        <taxon>Eurotiomycetidae</taxon>
        <taxon>Eurotiales</taxon>
        <taxon>Aspergillaceae</taxon>
        <taxon>Aspergillus</taxon>
        <taxon>Aspergillus subgen. Fumigati</taxon>
    </lineage>
</organism>
<dbReference type="EMBL" id="AF268869">
    <property type="protein sequence ID" value="AAG01800.1"/>
    <property type="molecule type" value="Genomic_DNA"/>
</dbReference>
<dbReference type="EMBL" id="AAHF01000007">
    <property type="protein sequence ID" value="EAL88394.1"/>
    <property type="molecule type" value="Genomic_DNA"/>
</dbReference>
<dbReference type="RefSeq" id="XP_750432.1">
    <property type="nucleotide sequence ID" value="XM_745339.1"/>
</dbReference>
<dbReference type="SMR" id="Q9HGV0"/>
<dbReference type="FunCoup" id="Q9HGV0">
    <property type="interactions" value="801"/>
</dbReference>
<dbReference type="STRING" id="330879.Q9HGV0"/>
<dbReference type="EnsemblFungi" id="EAL88394">
    <property type="protein sequence ID" value="EAL88394"/>
    <property type="gene ID" value="AFUA_1G06830"/>
</dbReference>
<dbReference type="GeneID" id="3507691"/>
<dbReference type="KEGG" id="afm:AFUA_1G06830"/>
<dbReference type="VEuPathDB" id="FungiDB:Afu1g06830"/>
<dbReference type="eggNOG" id="KOG1762">
    <property type="taxonomic scope" value="Eukaryota"/>
</dbReference>
<dbReference type="HOGENOM" id="CLU_114656_1_0_1"/>
<dbReference type="InParanoid" id="Q9HGV0"/>
<dbReference type="OMA" id="REELMCV"/>
<dbReference type="OrthoDB" id="2194681at2759"/>
<dbReference type="Proteomes" id="UP000002530">
    <property type="component" value="Chromosome 1"/>
</dbReference>
<dbReference type="GO" id="GO:0022625">
    <property type="term" value="C:cytosolic large ribosomal subunit"/>
    <property type="evidence" value="ECO:0000318"/>
    <property type="project" value="GO_Central"/>
</dbReference>
<dbReference type="GO" id="GO:0030295">
    <property type="term" value="F:protein kinase activator activity"/>
    <property type="evidence" value="ECO:0000318"/>
    <property type="project" value="GO_Central"/>
</dbReference>
<dbReference type="GO" id="GO:0043021">
    <property type="term" value="F:ribonucleoprotein complex binding"/>
    <property type="evidence" value="ECO:0000318"/>
    <property type="project" value="GO_Central"/>
</dbReference>
<dbReference type="GO" id="GO:0003735">
    <property type="term" value="F:structural constituent of ribosome"/>
    <property type="evidence" value="ECO:0000318"/>
    <property type="project" value="GO_Central"/>
</dbReference>
<dbReference type="GO" id="GO:0002181">
    <property type="term" value="P:cytoplasmic translation"/>
    <property type="evidence" value="ECO:0000318"/>
    <property type="project" value="GO_Central"/>
</dbReference>
<dbReference type="GO" id="GO:0006414">
    <property type="term" value="P:translational elongation"/>
    <property type="evidence" value="ECO:0007669"/>
    <property type="project" value="InterPro"/>
</dbReference>
<dbReference type="CDD" id="cd05831">
    <property type="entry name" value="Ribosomal_P1"/>
    <property type="match status" value="1"/>
</dbReference>
<dbReference type="FunFam" id="1.10.10.1410:FF:000001">
    <property type="entry name" value="60S acidic ribosomal protein P1"/>
    <property type="match status" value="1"/>
</dbReference>
<dbReference type="Gene3D" id="1.10.10.1410">
    <property type="match status" value="1"/>
</dbReference>
<dbReference type="HAMAP" id="MF_01478">
    <property type="entry name" value="Ribosomal_L12_arch"/>
    <property type="match status" value="1"/>
</dbReference>
<dbReference type="InterPro" id="IPR038716">
    <property type="entry name" value="P1/P2_N_sf"/>
</dbReference>
<dbReference type="InterPro" id="IPR027534">
    <property type="entry name" value="Ribosomal_P1/P2"/>
</dbReference>
<dbReference type="PANTHER" id="PTHR45696">
    <property type="entry name" value="60S ACIDIC RIBOSOMAL PROTEIN P1"/>
    <property type="match status" value="1"/>
</dbReference>
<dbReference type="PANTHER" id="PTHR45696:SF10">
    <property type="entry name" value="LARGE RIBOSOMAL SUBUNIT PROTEIN P1"/>
    <property type="match status" value="1"/>
</dbReference>
<dbReference type="Pfam" id="PF00428">
    <property type="entry name" value="Ribosomal_60s"/>
    <property type="match status" value="1"/>
</dbReference>
<gene>
    <name type="ORF">AFUA_1G06830</name>
</gene>
<name>RLA1_ASPFU</name>
<sequence length="111" mass="11128">MSTAELACSYAALILADDGVEITADKIQTLLGAAKVADVEPIWTSLFAKALEGKDIKDLLTNVGSGGAAAPAAVGGAAAGAAAPAEAAAAEEKKEEEKEESDEDMGFGLFD</sequence>
<accession>Q9HGV0</accession>
<accession>Q4WJ88</accession>
<reference key="1">
    <citation type="journal article" date="2002" name="Mol. Microbiol.">
        <title>Role of the ribosomal stalk components in the resistance of Aspergillus fumigatus to the sordarin antifungals.</title>
        <authorList>
            <person name="Santos C."/>
            <person name="Ballesta J.P.G."/>
        </authorList>
    </citation>
    <scope>NUCLEOTIDE SEQUENCE [GENOMIC DNA]</scope>
</reference>
<reference key="2">
    <citation type="journal article" date="2005" name="Nature">
        <title>Genomic sequence of the pathogenic and allergenic filamentous fungus Aspergillus fumigatus.</title>
        <authorList>
            <person name="Nierman W.C."/>
            <person name="Pain A."/>
            <person name="Anderson M.J."/>
            <person name="Wortman J.R."/>
            <person name="Kim H.S."/>
            <person name="Arroyo J."/>
            <person name="Berriman M."/>
            <person name="Abe K."/>
            <person name="Archer D.B."/>
            <person name="Bermejo C."/>
            <person name="Bennett J.W."/>
            <person name="Bowyer P."/>
            <person name="Chen D."/>
            <person name="Collins M."/>
            <person name="Coulsen R."/>
            <person name="Davies R."/>
            <person name="Dyer P.S."/>
            <person name="Farman M.L."/>
            <person name="Fedorova N."/>
            <person name="Fedorova N.D."/>
            <person name="Feldblyum T.V."/>
            <person name="Fischer R."/>
            <person name="Fosker N."/>
            <person name="Fraser A."/>
            <person name="Garcia J.L."/>
            <person name="Garcia M.J."/>
            <person name="Goble A."/>
            <person name="Goldman G.H."/>
            <person name="Gomi K."/>
            <person name="Griffith-Jones S."/>
            <person name="Gwilliam R."/>
            <person name="Haas B.J."/>
            <person name="Haas H."/>
            <person name="Harris D.E."/>
            <person name="Horiuchi H."/>
            <person name="Huang J."/>
            <person name="Humphray S."/>
            <person name="Jimenez J."/>
            <person name="Keller N."/>
            <person name="Khouri H."/>
            <person name="Kitamoto K."/>
            <person name="Kobayashi T."/>
            <person name="Konzack S."/>
            <person name="Kulkarni R."/>
            <person name="Kumagai T."/>
            <person name="Lafton A."/>
            <person name="Latge J.-P."/>
            <person name="Li W."/>
            <person name="Lord A."/>
            <person name="Lu C."/>
            <person name="Majoros W.H."/>
            <person name="May G.S."/>
            <person name="Miller B.L."/>
            <person name="Mohamoud Y."/>
            <person name="Molina M."/>
            <person name="Monod M."/>
            <person name="Mouyna I."/>
            <person name="Mulligan S."/>
            <person name="Murphy L.D."/>
            <person name="O'Neil S."/>
            <person name="Paulsen I."/>
            <person name="Penalva M.A."/>
            <person name="Pertea M."/>
            <person name="Price C."/>
            <person name="Pritchard B.L."/>
            <person name="Quail M.A."/>
            <person name="Rabbinowitsch E."/>
            <person name="Rawlins N."/>
            <person name="Rajandream M.A."/>
            <person name="Reichard U."/>
            <person name="Renauld H."/>
            <person name="Robson G.D."/>
            <person name="Rodriguez de Cordoba S."/>
            <person name="Rodriguez-Pena J.M."/>
            <person name="Ronning C.M."/>
            <person name="Rutter S."/>
            <person name="Salzberg S.L."/>
            <person name="Sanchez M."/>
            <person name="Sanchez-Ferrero J.C."/>
            <person name="Saunders D."/>
            <person name="Seeger K."/>
            <person name="Squares R."/>
            <person name="Squares S."/>
            <person name="Takeuchi M."/>
            <person name="Tekaia F."/>
            <person name="Turner G."/>
            <person name="Vazquez de Aldana C.R."/>
            <person name="Weidman J."/>
            <person name="White O."/>
            <person name="Woodward J.R."/>
            <person name="Yu J.-H."/>
            <person name="Fraser C.M."/>
            <person name="Galagan J.E."/>
            <person name="Asai K."/>
            <person name="Machida M."/>
            <person name="Hall N."/>
            <person name="Barrell B.G."/>
            <person name="Denning D.W."/>
        </authorList>
    </citation>
    <scope>NUCLEOTIDE SEQUENCE [LARGE SCALE GENOMIC DNA]</scope>
    <source>
        <strain>ATCC MYA-4609 / CBS 101355 / FGSC A1100 / Af293</strain>
    </source>
</reference>
<proteinExistence type="inferred from homology"/>
<feature type="chain" id="PRO_0000157701" description="Large ribosomal subunit protein P1">
    <location>
        <begin position="1"/>
        <end position="111"/>
    </location>
</feature>
<feature type="region of interest" description="Disordered" evidence="2">
    <location>
        <begin position="84"/>
        <end position="111"/>
    </location>
</feature>
<evidence type="ECO:0000250" key="1"/>
<evidence type="ECO:0000256" key="2">
    <source>
        <dbReference type="SAM" id="MobiDB-lite"/>
    </source>
</evidence>
<evidence type="ECO:0000305" key="3"/>
<comment type="function">
    <text evidence="1">Plays an important role in the elongation step of protein synthesis.</text>
</comment>
<comment type="subunit">
    <text evidence="1">P1 and P2 exist as dimers at the large ribosomal subunit.</text>
</comment>
<comment type="PTM">
    <text evidence="1">Phosphorylated.</text>
</comment>
<comment type="similarity">
    <text evidence="3">Belongs to the eukaryotic ribosomal protein P1/P2 family.</text>
</comment>